<feature type="chain" id="PRO_0000436911" description="Diglucosylglycerate octanoyltransferase">
    <location>
        <begin position="1"/>
        <end position="240"/>
    </location>
</feature>
<reference key="1">
    <citation type="journal article" date="2012" name="J. Bacteriol.">
        <title>Genome sequence of Mycobacterium hassiacum DSM 44199, a rare source of heat-stable mycobacterial proteins.</title>
        <authorList>
            <person name="Tiago I."/>
            <person name="Maranha A."/>
            <person name="Mendes V."/>
            <person name="Alarico S."/>
            <person name="Moynihan P.J."/>
            <person name="Clarke A.J."/>
            <person name="Macedo-Ribeiro S."/>
            <person name="Pereira P.J."/>
            <person name="Empadinhas N."/>
        </authorList>
    </citation>
    <scope>NUCLEOTIDE SEQUENCE [LARGE SCALE GENOMIC DNA]</scope>
    <source>
        <strain>DSM 44199 / CIP 105218 / JCM 12690 / 3849</strain>
    </source>
</reference>
<reference key="2">
    <citation type="journal article" date="2015" name="Sci. Rep.">
        <title>Octanoylation of early intermediates of mycobacterial methylglucose lipopolysaccharides.</title>
        <authorList>
            <person name="Maranha A."/>
            <person name="Moynihan P.J."/>
            <person name="Miranda V."/>
            <person name="Correia Lourenco E."/>
            <person name="Nunes-Costa D."/>
            <person name="Fraga J.S."/>
            <person name="Jose Barbosa Pereira P."/>
            <person name="Macedo-Ribeiro S."/>
            <person name="Ventura M.R."/>
            <person name="Clarke A.J."/>
            <person name="Empadinhas N."/>
        </authorList>
    </citation>
    <scope>FUNCTION</scope>
    <scope>CATALYTIC ACTIVITY</scope>
    <scope>SUBSTRATE SPECIFICITY</scope>
    <scope>BIOPHYSICOCHEMICAL PROPERTIES</scope>
    <scope>SUBUNIT</scope>
    <source>
        <strain>DSM 44199 / CIP 105218 / JCM 12690 / 3849</strain>
    </source>
</reference>
<protein>
    <recommendedName>
        <fullName evidence="2">Diglucosylglycerate octanoyltransferase</fullName>
        <shortName evidence="2">DGG octanoyltransferase</shortName>
        <ecNumber evidence="1">2.3.1.273</ecNumber>
    </recommendedName>
</protein>
<name>OCTT_MYCHD</name>
<accession>K5BJH8</accession>
<proteinExistence type="evidence at protein level"/>
<gene>
    <name evidence="2" type="primary">octT</name>
    <name evidence="4" type="ORF">C731_2896</name>
</gene>
<dbReference type="EC" id="2.3.1.273" evidence="1"/>
<dbReference type="EMBL" id="AMRA01000080">
    <property type="protein sequence ID" value="EKF23139.1"/>
    <property type="molecule type" value="Genomic_DNA"/>
</dbReference>
<dbReference type="STRING" id="1122247.GCA_000379865_02507"/>
<dbReference type="PATRIC" id="fig|1122247.3.peg.2780"/>
<dbReference type="eggNOG" id="COG2755">
    <property type="taxonomic scope" value="Bacteria"/>
</dbReference>
<dbReference type="BRENDA" id="2.3.1.273">
    <property type="organism ID" value="15810"/>
</dbReference>
<dbReference type="SABIO-RK" id="K5BJH8"/>
<dbReference type="Proteomes" id="UP000006265">
    <property type="component" value="Unassembled WGS sequence"/>
</dbReference>
<dbReference type="GO" id="GO:0016414">
    <property type="term" value="F:diglucosylglycerate octanoyltransferase activity"/>
    <property type="evidence" value="ECO:0000314"/>
    <property type="project" value="UniProtKB"/>
</dbReference>
<dbReference type="GO" id="GO:0051262">
    <property type="term" value="P:protein tetramerization"/>
    <property type="evidence" value="ECO:0000314"/>
    <property type="project" value="UniProtKB"/>
</dbReference>
<dbReference type="CDD" id="cd00229">
    <property type="entry name" value="SGNH_hydrolase"/>
    <property type="match status" value="1"/>
</dbReference>
<dbReference type="Gene3D" id="3.40.50.1110">
    <property type="entry name" value="SGNH hydrolase"/>
    <property type="match status" value="1"/>
</dbReference>
<dbReference type="InterPro" id="IPR050023">
    <property type="entry name" value="OctT"/>
</dbReference>
<dbReference type="InterPro" id="IPR013830">
    <property type="entry name" value="SGNH_hydro"/>
</dbReference>
<dbReference type="InterPro" id="IPR036514">
    <property type="entry name" value="SGNH_hydro_sf"/>
</dbReference>
<dbReference type="NCBIfam" id="NF043016">
    <property type="entry name" value="DigluglyOctase"/>
    <property type="match status" value="1"/>
</dbReference>
<dbReference type="Pfam" id="PF13472">
    <property type="entry name" value="Lipase_GDSL_2"/>
    <property type="match status" value="1"/>
</dbReference>
<dbReference type="SUPFAM" id="SSF52266">
    <property type="entry name" value="SGNH hydrolase"/>
    <property type="match status" value="1"/>
</dbReference>
<comment type="function">
    <text evidence="1">Sugar octanoyltransferase likely involved in the biosynthesis of mycobacterial methylglucose lipopolysaccharide (MGLP). Catalyzes the transfer of an octanoyl group from octanoyl-CoA to the C6 OH of the second glucose in diglucosylglycerate (DGG). Can also use hexanoyl-CoA as acyl donor in vitro. DGG is the preferred acceptor, but to a lesser extent, GG (glucosylglycerate) can be used as substrate. DGG and GG are the two earliest intermediates in MGLP biosynthesis.</text>
</comment>
<comment type="catalytic activity">
    <reaction evidence="1">
        <text>(2R)-2-O-[alpha-D-glucopyranosyl-(1-&gt;6)-alpha-D-glucopyranosyl]-glycerate + octanoyl-CoA = (2R)-2-O-[6-O-octanoyl-alpha-D-glucopyranosyl-(1-&gt;6)-alpha-D-glucopyranosyl]-glycerate + CoA</text>
        <dbReference type="Rhea" id="RHEA:56868"/>
        <dbReference type="ChEBI" id="CHEBI:57287"/>
        <dbReference type="ChEBI" id="CHEBI:57386"/>
        <dbReference type="ChEBI" id="CHEBI:141056"/>
        <dbReference type="ChEBI" id="CHEBI:141058"/>
        <dbReference type="EC" id="2.3.1.273"/>
    </reaction>
</comment>
<comment type="biophysicochemical properties">
    <kinetics>
        <KM evidence="1">9.5 mM for diglucosylglycerate (at 37 degrees Celsius)</KM>
        <KM evidence="1">6.6 mM for glucosylglycerate (at 37 degrees Celsius)</KM>
        <KM evidence="1">0.06 mM for octanoyl-CoA (when DGG is used as cosubstrate, at 37 degrees Celsius)</KM>
        <KM evidence="1">0.01 uM for octanoyl-CoA (when GG is used as cosubstrate, at 37 degrees Celsius)</KM>
        <KM evidence="1">0.02 uM for hexanoyl-CoA (when DGG is used as cosubstrate, at 37 degrees Celsius)</KM>
        <KM evidence="1">0.01 uM for hexanoyl-CoA (when GG is used as cosubstrate, at 37 degrees Celsius)</KM>
        <Vmax evidence="1">134.0 nmol/min/mg enzyme with diglucosylglycerate and octanoyl-CoA as substrates (at 37 degrees Celsius)</Vmax>
        <Vmax evidence="1">32.0 nmol/min/mg enzyme with glucosylglycerate and octanoyl-CoA as substrates (at 37 degrees Celsius)</Vmax>
        <Vmax evidence="1">41.0 nmol/min/mg enzyme with diglucosylglycerate and hexanoyl-CoA as substrates (at 37 degrees Celsius)</Vmax>
    </kinetics>
    <phDependence>
        <text evidence="1">Optimum pH is 7.0-8.5.</text>
    </phDependence>
    <temperatureDependence>
        <text evidence="1">Optimum temperature is 45 degrees Celsius. Activity sharply decreases above this temperature.</text>
    </temperatureDependence>
</comment>
<comment type="subunit">
    <text evidence="1">Homotetramer.</text>
</comment>
<comment type="similarity">
    <text evidence="3">Belongs to the OctT acyltransferase family.</text>
</comment>
<organism>
    <name type="scientific">Mycolicibacterium hassiacum (strain DSM 44199 / CIP 105218 / JCM 12690 / 3849)</name>
    <name type="common">Mycobacterium hassiacum</name>
    <dbReference type="NCBI Taxonomy" id="1122247"/>
    <lineage>
        <taxon>Bacteria</taxon>
        <taxon>Bacillati</taxon>
        <taxon>Actinomycetota</taxon>
        <taxon>Actinomycetes</taxon>
        <taxon>Mycobacteriales</taxon>
        <taxon>Mycobacteriaceae</taxon>
        <taxon>Mycolicibacterium</taxon>
    </lineage>
</organism>
<evidence type="ECO:0000269" key="1">
    <source>
    </source>
</evidence>
<evidence type="ECO:0000303" key="2">
    <source>
    </source>
</evidence>
<evidence type="ECO:0000305" key="3"/>
<evidence type="ECO:0000312" key="4">
    <source>
        <dbReference type="EMBL" id="EKF23139.1"/>
    </source>
</evidence>
<sequence>MSGRRPTLLVFCDSLSYYGPRGGLPADDPRIWPNIVASQLDWDVELIGRVGWTSRDVWWAATQDPRAWAALPRAGAVIFATGGMDSLPSPLPTALRELIRYIRPPWLRRRVRDLYGWLQPRLSPVSRNALPPHLTAEYLEMTRGAIDFNRPGIPVVAALPSVHIADSYGRAHHGREATARAITEWARQHGVVLVDLKAAVADQVLNGRGNPDGIHWNFEAHQAVAELMLKALAEAGVPCR</sequence>
<keyword id="KW-0012">Acyltransferase</keyword>
<keyword id="KW-1185">Reference proteome</keyword>
<keyword id="KW-0808">Transferase</keyword>